<sequence length="315" mass="34996">MACSEFSFHMPSLEELAEVLQKGLTDNFADVQVSVVDCPDLTKEPFTFPVRGICGQTRIAEVGGVPYLLPLVNKKKVYDLNEIAKVIKLPGAFILGAGAGPFQTLGFNSEFMPIVQTASEHNQPVNGSYFAHKNPADGACLLEKYSQKYHDFGCALLANLFASEGQPGKVIEVQAKRRTGELNFVSCMRQTLEEHYGDKPVGMGGTFIVQKGKVKAHIMPAEFSSCPLNSDEAVNKWLHFYEMKAPLVCLPVFVSKDPGLDLRLEHTHFFSHHGEGGHYHYDTTPDTVEYLGYFSPAQFLYRIDQPKETHAFGRD</sequence>
<organism>
    <name type="scientific">Mus musculus</name>
    <name type="common">Mouse</name>
    <dbReference type="NCBI Taxonomy" id="10090"/>
    <lineage>
        <taxon>Eukaryota</taxon>
        <taxon>Metazoa</taxon>
        <taxon>Chordata</taxon>
        <taxon>Craniata</taxon>
        <taxon>Vertebrata</taxon>
        <taxon>Euteleostomi</taxon>
        <taxon>Mammalia</taxon>
        <taxon>Eutheria</taxon>
        <taxon>Euarchontoglires</taxon>
        <taxon>Glires</taxon>
        <taxon>Rodentia</taxon>
        <taxon>Myomorpha</taxon>
        <taxon>Muroidea</taxon>
        <taxon>Muridae</taxon>
        <taxon>Murinae</taxon>
        <taxon>Mus</taxon>
        <taxon>Mus</taxon>
    </lineage>
</organism>
<comment type="function">
    <text evidence="1">Exhibits ester hydrolase activity on the substrate p-nitrophenyl acetate, in vitro. Regulates DNA damage and repair by regulating HIF1A degradation via chaperone-mediated autophagy (CMA).</text>
</comment>
<comment type="cofactor">
    <cofactor evidence="1">
        <name>Zn(2+)</name>
        <dbReference type="ChEBI" id="CHEBI:29105"/>
    </cofactor>
</comment>
<comment type="subunit">
    <text evidence="1">Monomer.</text>
</comment>
<comment type="subcellular location">
    <subcellularLocation>
        <location evidence="1">Nucleus</location>
    </subcellularLocation>
    <subcellularLocation>
        <location evidence="1">Cytoplasm</location>
    </subcellularLocation>
    <text evidence="1">Mainly located in the cytoplasm.</text>
</comment>
<reference key="1">
    <citation type="journal article" date="2005" name="Science">
        <title>The transcriptional landscape of the mammalian genome.</title>
        <authorList>
            <person name="Carninci P."/>
            <person name="Kasukawa T."/>
            <person name="Katayama S."/>
            <person name="Gough J."/>
            <person name="Frith M.C."/>
            <person name="Maeda N."/>
            <person name="Oyama R."/>
            <person name="Ravasi T."/>
            <person name="Lenhard B."/>
            <person name="Wells C."/>
            <person name="Kodzius R."/>
            <person name="Shimokawa K."/>
            <person name="Bajic V.B."/>
            <person name="Brenner S.E."/>
            <person name="Batalov S."/>
            <person name="Forrest A.R."/>
            <person name="Zavolan M."/>
            <person name="Davis M.J."/>
            <person name="Wilming L.G."/>
            <person name="Aidinis V."/>
            <person name="Allen J.E."/>
            <person name="Ambesi-Impiombato A."/>
            <person name="Apweiler R."/>
            <person name="Aturaliya R.N."/>
            <person name="Bailey T.L."/>
            <person name="Bansal M."/>
            <person name="Baxter L."/>
            <person name="Beisel K.W."/>
            <person name="Bersano T."/>
            <person name="Bono H."/>
            <person name="Chalk A.M."/>
            <person name="Chiu K.P."/>
            <person name="Choudhary V."/>
            <person name="Christoffels A."/>
            <person name="Clutterbuck D.R."/>
            <person name="Crowe M.L."/>
            <person name="Dalla E."/>
            <person name="Dalrymple B.P."/>
            <person name="de Bono B."/>
            <person name="Della Gatta G."/>
            <person name="di Bernardo D."/>
            <person name="Down T."/>
            <person name="Engstrom P."/>
            <person name="Fagiolini M."/>
            <person name="Faulkner G."/>
            <person name="Fletcher C.F."/>
            <person name="Fukushima T."/>
            <person name="Furuno M."/>
            <person name="Futaki S."/>
            <person name="Gariboldi M."/>
            <person name="Georgii-Hemming P."/>
            <person name="Gingeras T.R."/>
            <person name="Gojobori T."/>
            <person name="Green R.E."/>
            <person name="Gustincich S."/>
            <person name="Harbers M."/>
            <person name="Hayashi Y."/>
            <person name="Hensch T.K."/>
            <person name="Hirokawa N."/>
            <person name="Hill D."/>
            <person name="Huminiecki L."/>
            <person name="Iacono M."/>
            <person name="Ikeo K."/>
            <person name="Iwama A."/>
            <person name="Ishikawa T."/>
            <person name="Jakt M."/>
            <person name="Kanapin A."/>
            <person name="Katoh M."/>
            <person name="Kawasawa Y."/>
            <person name="Kelso J."/>
            <person name="Kitamura H."/>
            <person name="Kitano H."/>
            <person name="Kollias G."/>
            <person name="Krishnan S.P."/>
            <person name="Kruger A."/>
            <person name="Kummerfeld S.K."/>
            <person name="Kurochkin I.V."/>
            <person name="Lareau L.F."/>
            <person name="Lazarevic D."/>
            <person name="Lipovich L."/>
            <person name="Liu J."/>
            <person name="Liuni S."/>
            <person name="McWilliam S."/>
            <person name="Madan Babu M."/>
            <person name="Madera M."/>
            <person name="Marchionni L."/>
            <person name="Matsuda H."/>
            <person name="Matsuzawa S."/>
            <person name="Miki H."/>
            <person name="Mignone F."/>
            <person name="Miyake S."/>
            <person name="Morris K."/>
            <person name="Mottagui-Tabar S."/>
            <person name="Mulder N."/>
            <person name="Nakano N."/>
            <person name="Nakauchi H."/>
            <person name="Ng P."/>
            <person name="Nilsson R."/>
            <person name="Nishiguchi S."/>
            <person name="Nishikawa S."/>
            <person name="Nori F."/>
            <person name="Ohara O."/>
            <person name="Okazaki Y."/>
            <person name="Orlando V."/>
            <person name="Pang K.C."/>
            <person name="Pavan W.J."/>
            <person name="Pavesi G."/>
            <person name="Pesole G."/>
            <person name="Petrovsky N."/>
            <person name="Piazza S."/>
            <person name="Reed J."/>
            <person name="Reid J.F."/>
            <person name="Ring B.Z."/>
            <person name="Ringwald M."/>
            <person name="Rost B."/>
            <person name="Ruan Y."/>
            <person name="Salzberg S.L."/>
            <person name="Sandelin A."/>
            <person name="Schneider C."/>
            <person name="Schoenbach C."/>
            <person name="Sekiguchi K."/>
            <person name="Semple C.A."/>
            <person name="Seno S."/>
            <person name="Sessa L."/>
            <person name="Sheng Y."/>
            <person name="Shibata Y."/>
            <person name="Shimada H."/>
            <person name="Shimada K."/>
            <person name="Silva D."/>
            <person name="Sinclair B."/>
            <person name="Sperling S."/>
            <person name="Stupka E."/>
            <person name="Sugiura K."/>
            <person name="Sultana R."/>
            <person name="Takenaka Y."/>
            <person name="Taki K."/>
            <person name="Tammoja K."/>
            <person name="Tan S.L."/>
            <person name="Tang S."/>
            <person name="Taylor M.S."/>
            <person name="Tegner J."/>
            <person name="Teichmann S.A."/>
            <person name="Ueda H.R."/>
            <person name="van Nimwegen E."/>
            <person name="Verardo R."/>
            <person name="Wei C.L."/>
            <person name="Yagi K."/>
            <person name="Yamanishi H."/>
            <person name="Zabarovsky E."/>
            <person name="Zhu S."/>
            <person name="Zimmer A."/>
            <person name="Hide W."/>
            <person name="Bult C."/>
            <person name="Grimmond S.M."/>
            <person name="Teasdale R.D."/>
            <person name="Liu E.T."/>
            <person name="Brusic V."/>
            <person name="Quackenbush J."/>
            <person name="Wahlestedt C."/>
            <person name="Mattick J.S."/>
            <person name="Hume D.A."/>
            <person name="Kai C."/>
            <person name="Sasaki D."/>
            <person name="Tomaru Y."/>
            <person name="Fukuda S."/>
            <person name="Kanamori-Katayama M."/>
            <person name="Suzuki M."/>
            <person name="Aoki J."/>
            <person name="Arakawa T."/>
            <person name="Iida J."/>
            <person name="Imamura K."/>
            <person name="Itoh M."/>
            <person name="Kato T."/>
            <person name="Kawaji H."/>
            <person name="Kawagashira N."/>
            <person name="Kawashima T."/>
            <person name="Kojima M."/>
            <person name="Kondo S."/>
            <person name="Konno H."/>
            <person name="Nakano K."/>
            <person name="Ninomiya N."/>
            <person name="Nishio T."/>
            <person name="Okada M."/>
            <person name="Plessy C."/>
            <person name="Shibata K."/>
            <person name="Shiraki T."/>
            <person name="Suzuki S."/>
            <person name="Tagami M."/>
            <person name="Waki K."/>
            <person name="Watahiki A."/>
            <person name="Okamura-Oho Y."/>
            <person name="Suzuki H."/>
            <person name="Kawai J."/>
            <person name="Hayashizaki Y."/>
        </authorList>
    </citation>
    <scope>NUCLEOTIDE SEQUENCE [LARGE SCALE MRNA]</scope>
    <source>
        <strain>C57BL/6J</strain>
        <strain>NOD</strain>
        <tissue>Kidney</tissue>
        <tissue>Thymus</tissue>
    </source>
</reference>
<reference key="2">
    <citation type="submission" date="2005-07" db="EMBL/GenBank/DDBJ databases">
        <title>Cloning of mouse full open reading frames in Gateway(R) system entry vector (pDONR201).</title>
        <authorList>
            <person name="Ebert L."/>
            <person name="Muenstermann E."/>
            <person name="Schatten R."/>
            <person name="Henze S."/>
            <person name="Bohn E."/>
            <person name="Mollenhauer J."/>
            <person name="Wiemann S."/>
            <person name="Schick M."/>
            <person name="Korn B."/>
        </authorList>
    </citation>
    <scope>NUCLEOTIDE SEQUENCE [LARGE SCALE MRNA]</scope>
</reference>
<reference key="3">
    <citation type="journal article" date="2004" name="Genome Res.">
        <title>The status, quality, and expansion of the NIH full-length cDNA project: the Mammalian Gene Collection (MGC).</title>
        <authorList>
            <consortium name="The MGC Project Team"/>
        </authorList>
    </citation>
    <scope>NUCLEOTIDE SEQUENCE [LARGE SCALE MRNA]</scope>
    <source>
        <strain>FVB/N</strain>
        <tissue>Mammary tumor</tissue>
    </source>
</reference>
<reference key="4">
    <citation type="journal article" date="2010" name="Cell">
        <title>A tissue-specific atlas of mouse protein phosphorylation and expression.</title>
        <authorList>
            <person name="Huttlin E.L."/>
            <person name="Jedrychowski M.P."/>
            <person name="Elias J.E."/>
            <person name="Goswami T."/>
            <person name="Rad R."/>
            <person name="Beausoleil S.A."/>
            <person name="Villen J."/>
            <person name="Haas W."/>
            <person name="Sowa M.E."/>
            <person name="Gygi S.P."/>
        </authorList>
    </citation>
    <scope>IDENTIFICATION BY MASS SPECTROMETRY [LARGE SCALE ANALYSIS]</scope>
    <source>
        <tissue>Brain</tissue>
        <tissue>Brown adipose tissue</tissue>
        <tissue>Heart</tissue>
        <tissue>Kidney</tissue>
        <tissue>Liver</tissue>
        <tissue>Lung</tissue>
        <tissue>Pancreas</tissue>
        <tissue>Spleen</tissue>
        <tissue>Testis</tissue>
    </source>
</reference>
<name>CK054_MOUSE</name>
<evidence type="ECO:0000250" key="1">
    <source>
        <dbReference type="UniProtKB" id="Q9H0W9"/>
    </source>
</evidence>
<protein>
    <recommendedName>
        <fullName>Ester hydrolase C11orf54 homolog</fullName>
        <ecNumber evidence="1">3.1.-.-</ecNumber>
    </recommendedName>
</protein>
<proteinExistence type="evidence at protein level"/>
<keyword id="KW-0963">Cytoplasm</keyword>
<keyword id="KW-0378">Hydrolase</keyword>
<keyword id="KW-0479">Metal-binding</keyword>
<keyword id="KW-0539">Nucleus</keyword>
<keyword id="KW-1185">Reference proteome</keyword>
<keyword id="KW-0862">Zinc</keyword>
<feature type="chain" id="PRO_0000246030" description="Ester hydrolase C11orf54 homolog">
    <location>
        <begin position="1"/>
        <end position="315"/>
    </location>
</feature>
<feature type="binding site" evidence="1">
    <location>
        <position position="266"/>
    </location>
    <ligand>
        <name>Zn(2+)</name>
        <dbReference type="ChEBI" id="CHEBI:29105"/>
        <note>catalytic</note>
    </ligand>
</feature>
<feature type="binding site" evidence="1">
    <location>
        <position position="268"/>
    </location>
    <ligand>
        <name>Zn(2+)</name>
        <dbReference type="ChEBI" id="CHEBI:29105"/>
        <note>catalytic</note>
    </ligand>
</feature>
<feature type="binding site" evidence="1">
    <location>
        <position position="278"/>
    </location>
    <ligand>
        <name>Zn(2+)</name>
        <dbReference type="ChEBI" id="CHEBI:29105"/>
        <note>catalytic</note>
    </ligand>
</feature>
<dbReference type="EC" id="3.1.-.-" evidence="1"/>
<dbReference type="EMBL" id="AK088123">
    <property type="protein sequence ID" value="BAC40160.1"/>
    <property type="molecule type" value="mRNA"/>
</dbReference>
<dbReference type="EMBL" id="AK147073">
    <property type="protein sequence ID" value="BAE27654.1"/>
    <property type="molecule type" value="mRNA"/>
</dbReference>
<dbReference type="EMBL" id="CT010296">
    <property type="protein sequence ID" value="CAJ18504.1"/>
    <property type="molecule type" value="mRNA"/>
</dbReference>
<dbReference type="EMBL" id="BC011540">
    <property type="protein sequence ID" value="AAH11540.1"/>
    <property type="molecule type" value="mRNA"/>
</dbReference>
<dbReference type="EMBL" id="BC016078">
    <property type="protein sequence ID" value="AAH16078.1"/>
    <property type="molecule type" value="mRNA"/>
</dbReference>
<dbReference type="CCDS" id="CCDS22835.1"/>
<dbReference type="RefSeq" id="NP_001186413.1">
    <property type="nucleotide sequence ID" value="NM_001199484.1"/>
</dbReference>
<dbReference type="RefSeq" id="NP_001186414.1">
    <property type="nucleotide sequence ID" value="NM_001199485.1"/>
</dbReference>
<dbReference type="RefSeq" id="NP_598493.1">
    <property type="nucleotide sequence ID" value="NM_133732.3"/>
</dbReference>
<dbReference type="RefSeq" id="XP_006510659.1">
    <property type="nucleotide sequence ID" value="XM_006510596.3"/>
</dbReference>
<dbReference type="SMR" id="Q91V76"/>
<dbReference type="BioGRID" id="214392">
    <property type="interactions" value="3"/>
</dbReference>
<dbReference type="FunCoup" id="Q91V76">
    <property type="interactions" value="2071"/>
</dbReference>
<dbReference type="STRING" id="10090.ENSMUSP00000136717"/>
<dbReference type="GlyGen" id="Q91V76">
    <property type="glycosylation" value="1 site, 1 O-linked glycan (1 site)"/>
</dbReference>
<dbReference type="iPTMnet" id="Q91V76"/>
<dbReference type="PhosphoSitePlus" id="Q91V76"/>
<dbReference type="SwissPalm" id="Q91V76"/>
<dbReference type="jPOST" id="Q91V76"/>
<dbReference type="PaxDb" id="10090-ENSMUSP00000136717"/>
<dbReference type="PeptideAtlas" id="Q91V76"/>
<dbReference type="Pumba" id="Q91V76"/>
<dbReference type="Antibodypedia" id="31588">
    <property type="antibodies" value="61 antibodies from 16 providers"/>
</dbReference>
<dbReference type="DNASU" id="70984"/>
<dbReference type="Ensembl" id="ENSMUST00000034414.10">
    <property type="protein sequence ID" value="ENSMUSP00000034414.9"/>
    <property type="gene ID" value="ENSMUSG00000031938.16"/>
</dbReference>
<dbReference type="Ensembl" id="ENSMUST00000178977.9">
    <property type="protein sequence ID" value="ENSMUSP00000136335.2"/>
    <property type="gene ID" value="ENSMUSG00000031938.16"/>
</dbReference>
<dbReference type="Ensembl" id="ENSMUST00000180339.8">
    <property type="protein sequence ID" value="ENSMUSP00000136717.2"/>
    <property type="gene ID" value="ENSMUSG00000031938.16"/>
</dbReference>
<dbReference type="GeneID" id="70984"/>
<dbReference type="KEGG" id="mmu:70984"/>
<dbReference type="UCSC" id="uc009ofm.2">
    <property type="organism name" value="mouse"/>
</dbReference>
<dbReference type="AGR" id="MGI:1918234"/>
<dbReference type="MGI" id="MGI:1918234">
    <property type="gene designation" value="4931406C07Rik"/>
</dbReference>
<dbReference type="VEuPathDB" id="HostDB:ENSMUSG00000031938"/>
<dbReference type="eggNOG" id="KOG4048">
    <property type="taxonomic scope" value="Eukaryota"/>
</dbReference>
<dbReference type="GeneTree" id="ENSGT00390000017214"/>
<dbReference type="HOGENOM" id="CLU_055541_0_0_1"/>
<dbReference type="InParanoid" id="Q91V76"/>
<dbReference type="OMA" id="YHIMPDF"/>
<dbReference type="OrthoDB" id="5119241at2759"/>
<dbReference type="PhylomeDB" id="Q91V76"/>
<dbReference type="TreeFam" id="TF313169"/>
<dbReference type="BioGRID-ORCS" id="70984">
    <property type="hits" value="0 hits in 77 CRISPR screens"/>
</dbReference>
<dbReference type="PRO" id="PR:Q91V76"/>
<dbReference type="Proteomes" id="UP000000589">
    <property type="component" value="Chromosome 9"/>
</dbReference>
<dbReference type="RNAct" id="Q91V76">
    <property type="molecule type" value="protein"/>
</dbReference>
<dbReference type="Bgee" id="ENSMUSG00000031938">
    <property type="expression patterns" value="Expressed in parotid gland and 258 other cell types or tissues"/>
</dbReference>
<dbReference type="ExpressionAtlas" id="Q91V76">
    <property type="expression patterns" value="baseline and differential"/>
</dbReference>
<dbReference type="GO" id="GO:0005737">
    <property type="term" value="C:cytoplasm"/>
    <property type="evidence" value="ECO:0000250"/>
    <property type="project" value="UniProtKB"/>
</dbReference>
<dbReference type="GO" id="GO:0016604">
    <property type="term" value="C:nuclear body"/>
    <property type="evidence" value="ECO:0007669"/>
    <property type="project" value="Ensembl"/>
</dbReference>
<dbReference type="GO" id="GO:0016788">
    <property type="term" value="F:hydrolase activity, acting on ester bonds"/>
    <property type="evidence" value="ECO:0000250"/>
    <property type="project" value="UniProtKB"/>
</dbReference>
<dbReference type="GO" id="GO:0008270">
    <property type="term" value="F:zinc ion binding"/>
    <property type="evidence" value="ECO:0000250"/>
    <property type="project" value="UniProtKB"/>
</dbReference>
<dbReference type="GO" id="GO:0006974">
    <property type="term" value="P:DNA damage response"/>
    <property type="evidence" value="ECO:0000250"/>
    <property type="project" value="UniProtKB"/>
</dbReference>
<dbReference type="GO" id="GO:0006282">
    <property type="term" value="P:regulation of DNA repair"/>
    <property type="evidence" value="ECO:0000250"/>
    <property type="project" value="UniProtKB"/>
</dbReference>
<dbReference type="CDD" id="cd17298">
    <property type="entry name" value="DUF1907"/>
    <property type="match status" value="1"/>
</dbReference>
<dbReference type="InterPro" id="IPR015021">
    <property type="entry name" value="C11orf54_DUF1907"/>
</dbReference>
<dbReference type="PANTHER" id="PTHR13204:SF1">
    <property type="entry name" value="ESTER HYDROLASE C11ORF54"/>
    <property type="match status" value="1"/>
</dbReference>
<dbReference type="PANTHER" id="PTHR13204">
    <property type="entry name" value="PTD012 PROTEIN"/>
    <property type="match status" value="1"/>
</dbReference>
<dbReference type="Pfam" id="PF08925">
    <property type="entry name" value="DUF1907"/>
    <property type="match status" value="1"/>
</dbReference>
<dbReference type="SMART" id="SM01168">
    <property type="entry name" value="DUF1907"/>
    <property type="match status" value="1"/>
</dbReference>
<dbReference type="SUPFAM" id="SSF117856">
    <property type="entry name" value="AF0104/ALDC/Ptd012-like"/>
    <property type="match status" value="1"/>
</dbReference>
<accession>Q91V76</accession>